<accession>Q3A8R0</accession>
<gene>
    <name evidence="1" type="primary">sat</name>
    <name type="ordered locus">CHY_2689</name>
</gene>
<feature type="chain" id="PRO_1000009038" description="Sulfate adenylyltransferase">
    <location>
        <begin position="1"/>
        <end position="381"/>
    </location>
</feature>
<protein>
    <recommendedName>
        <fullName evidence="1">Sulfate adenylyltransferase</fullName>
        <ecNumber evidence="1">2.7.7.4</ecNumber>
    </recommendedName>
    <alternativeName>
        <fullName evidence="1">ATP-sulfurylase</fullName>
    </alternativeName>
    <alternativeName>
        <fullName evidence="1">Sulfate adenylate transferase</fullName>
        <shortName evidence="1">SAT</shortName>
    </alternativeName>
</protein>
<comment type="catalytic activity">
    <reaction evidence="1">
        <text>sulfate + ATP + H(+) = adenosine 5'-phosphosulfate + diphosphate</text>
        <dbReference type="Rhea" id="RHEA:18133"/>
        <dbReference type="ChEBI" id="CHEBI:15378"/>
        <dbReference type="ChEBI" id="CHEBI:16189"/>
        <dbReference type="ChEBI" id="CHEBI:30616"/>
        <dbReference type="ChEBI" id="CHEBI:33019"/>
        <dbReference type="ChEBI" id="CHEBI:58243"/>
        <dbReference type="EC" id="2.7.7.4"/>
    </reaction>
</comment>
<comment type="pathway">
    <text evidence="1">Sulfur metabolism; hydrogen sulfide biosynthesis; sulfite from sulfate: step 1/3.</text>
</comment>
<comment type="similarity">
    <text evidence="1">Belongs to the sulfate adenylyltransferase family.</text>
</comment>
<reference key="1">
    <citation type="journal article" date="2005" name="PLoS Genet.">
        <title>Life in hot carbon monoxide: the complete genome sequence of Carboxydothermus hydrogenoformans Z-2901.</title>
        <authorList>
            <person name="Wu M."/>
            <person name="Ren Q."/>
            <person name="Durkin A.S."/>
            <person name="Daugherty S.C."/>
            <person name="Brinkac L.M."/>
            <person name="Dodson R.J."/>
            <person name="Madupu R."/>
            <person name="Sullivan S.A."/>
            <person name="Kolonay J.F."/>
            <person name="Nelson W.C."/>
            <person name="Tallon L.J."/>
            <person name="Jones K.M."/>
            <person name="Ulrich L.E."/>
            <person name="Gonzalez J.M."/>
            <person name="Zhulin I.B."/>
            <person name="Robb F.T."/>
            <person name="Eisen J.A."/>
        </authorList>
    </citation>
    <scope>NUCLEOTIDE SEQUENCE [LARGE SCALE GENOMIC DNA]</scope>
    <source>
        <strain>ATCC BAA-161 / DSM 6008 / Z-2901</strain>
    </source>
</reference>
<organism>
    <name type="scientific">Carboxydothermus hydrogenoformans (strain ATCC BAA-161 / DSM 6008 / Z-2901)</name>
    <dbReference type="NCBI Taxonomy" id="246194"/>
    <lineage>
        <taxon>Bacteria</taxon>
        <taxon>Bacillati</taxon>
        <taxon>Bacillota</taxon>
        <taxon>Clostridia</taxon>
        <taxon>Thermoanaerobacterales</taxon>
        <taxon>Thermoanaerobacteraceae</taxon>
        <taxon>Carboxydothermus</taxon>
    </lineage>
</organism>
<dbReference type="EC" id="2.7.7.4" evidence="1"/>
<dbReference type="EMBL" id="CP000141">
    <property type="protein sequence ID" value="ABB15092.1"/>
    <property type="molecule type" value="Genomic_DNA"/>
</dbReference>
<dbReference type="RefSeq" id="WP_011345545.1">
    <property type="nucleotide sequence ID" value="NC_007503.1"/>
</dbReference>
<dbReference type="SMR" id="Q3A8R0"/>
<dbReference type="FunCoup" id="Q3A8R0">
    <property type="interactions" value="260"/>
</dbReference>
<dbReference type="STRING" id="246194.CHY_2689"/>
<dbReference type="KEGG" id="chy:CHY_2689"/>
<dbReference type="eggNOG" id="COG2046">
    <property type="taxonomic scope" value="Bacteria"/>
</dbReference>
<dbReference type="HOGENOM" id="CLU_022950_1_1_9"/>
<dbReference type="InParanoid" id="Q3A8R0"/>
<dbReference type="OrthoDB" id="9804504at2"/>
<dbReference type="UniPathway" id="UPA00140">
    <property type="reaction ID" value="UER00204"/>
</dbReference>
<dbReference type="Proteomes" id="UP000002706">
    <property type="component" value="Chromosome"/>
</dbReference>
<dbReference type="GO" id="GO:0005524">
    <property type="term" value="F:ATP binding"/>
    <property type="evidence" value="ECO:0007669"/>
    <property type="project" value="UniProtKB-KW"/>
</dbReference>
<dbReference type="GO" id="GO:0004781">
    <property type="term" value="F:sulfate adenylyltransferase (ATP) activity"/>
    <property type="evidence" value="ECO:0007669"/>
    <property type="project" value="UniProtKB-UniRule"/>
</dbReference>
<dbReference type="GO" id="GO:0070814">
    <property type="term" value="P:hydrogen sulfide biosynthetic process"/>
    <property type="evidence" value="ECO:0007669"/>
    <property type="project" value="UniProtKB-UniRule"/>
</dbReference>
<dbReference type="GO" id="GO:0000103">
    <property type="term" value="P:sulfate assimilation"/>
    <property type="evidence" value="ECO:0007669"/>
    <property type="project" value="UniProtKB-UniRule"/>
</dbReference>
<dbReference type="CDD" id="cd00517">
    <property type="entry name" value="ATPS"/>
    <property type="match status" value="1"/>
</dbReference>
<dbReference type="Gene3D" id="3.40.50.620">
    <property type="entry name" value="HUPs"/>
    <property type="match status" value="1"/>
</dbReference>
<dbReference type="Gene3D" id="3.10.400.10">
    <property type="entry name" value="Sulfate adenylyltransferase"/>
    <property type="match status" value="1"/>
</dbReference>
<dbReference type="HAMAP" id="MF_00066">
    <property type="entry name" value="Sulf_adenylyltr"/>
    <property type="match status" value="1"/>
</dbReference>
<dbReference type="InterPro" id="IPR025980">
    <property type="entry name" value="ATP-Sase_PUA-like_dom"/>
</dbReference>
<dbReference type="InterPro" id="IPR015947">
    <property type="entry name" value="PUA-like_sf"/>
</dbReference>
<dbReference type="InterPro" id="IPR014729">
    <property type="entry name" value="Rossmann-like_a/b/a_fold"/>
</dbReference>
<dbReference type="InterPro" id="IPR020792">
    <property type="entry name" value="SO4_adenylyltransferase_pro"/>
</dbReference>
<dbReference type="InterPro" id="IPR024951">
    <property type="entry name" value="Sulfurylase_cat_dom"/>
</dbReference>
<dbReference type="InterPro" id="IPR002650">
    <property type="entry name" value="Sulphate_adenylyltransferase"/>
</dbReference>
<dbReference type="NCBIfam" id="NF003166">
    <property type="entry name" value="PRK04149.1"/>
    <property type="match status" value="1"/>
</dbReference>
<dbReference type="NCBIfam" id="TIGR00339">
    <property type="entry name" value="sopT"/>
    <property type="match status" value="1"/>
</dbReference>
<dbReference type="PANTHER" id="PTHR43509">
    <property type="match status" value="1"/>
</dbReference>
<dbReference type="PANTHER" id="PTHR43509:SF1">
    <property type="entry name" value="SULFATE ADENYLYLTRANSFERASE"/>
    <property type="match status" value="1"/>
</dbReference>
<dbReference type="Pfam" id="PF01747">
    <property type="entry name" value="ATP-sulfurylase"/>
    <property type="match status" value="1"/>
</dbReference>
<dbReference type="Pfam" id="PF14306">
    <property type="entry name" value="PUA_2"/>
    <property type="match status" value="1"/>
</dbReference>
<dbReference type="SUPFAM" id="SSF52374">
    <property type="entry name" value="Nucleotidylyl transferase"/>
    <property type="match status" value="1"/>
</dbReference>
<dbReference type="SUPFAM" id="SSF88697">
    <property type="entry name" value="PUA domain-like"/>
    <property type="match status" value="1"/>
</dbReference>
<evidence type="ECO:0000255" key="1">
    <source>
        <dbReference type="HAMAP-Rule" id="MF_00066"/>
    </source>
</evidence>
<name>SAT_CARHZ</name>
<sequence length="381" mass="43651">MVNYHGRKEVSNILTSEEYEELKGQNFLKLSVSKTEYFDLFLLGVGLYAPLEGFMDEDDYYSTLEQFTLSSGFLWSIPIVLRVSEEEARLYDGREKVLLTAANGELLGLLESPRAFKLNKILEVEKVFKTSSPEHPGVQKILGEDEWAVAGKIKIYPPAFREIDLNLSLFPQKTREIFKSRNYKTVVGFQTRNPIHRAHEYLQKIALEIFDGLFVNPLVGETKGDDIPADVRLKCYEALLNNYYPKDRFVFATLPAPMRYAGPREAVHHAIIRQNYGCTHFIVGRDHAGVGNFYGPFEAQEIFDTFPENALEIKIVKFDNAFYCSKCGQMATKKTCPHGPEHHLSLSGTKVREMLREGKPLPEEFTRPEVAEVLRRYYQSL</sequence>
<proteinExistence type="inferred from homology"/>
<keyword id="KW-0067">ATP-binding</keyword>
<keyword id="KW-0547">Nucleotide-binding</keyword>
<keyword id="KW-0548">Nucleotidyltransferase</keyword>
<keyword id="KW-1185">Reference proteome</keyword>
<keyword id="KW-0808">Transferase</keyword>